<keyword id="KW-0903">Direct protein sequencing</keyword>
<keyword id="KW-1015">Disulfide bond</keyword>
<keyword id="KW-0960">Knottin</keyword>
<keyword id="KW-0964">Secreted</keyword>
<name>TX17_PHORI</name>
<accession>P84016</accession>
<dbReference type="SMR" id="P84016"/>
<dbReference type="ArachnoServer" id="AS000215">
    <property type="toxin name" value="U6-ctenitoxin-Pr1a"/>
</dbReference>
<dbReference type="GO" id="GO:0005576">
    <property type="term" value="C:extracellular region"/>
    <property type="evidence" value="ECO:0007669"/>
    <property type="project" value="UniProtKB-SubCell"/>
</dbReference>
<dbReference type="InterPro" id="IPR012634">
    <property type="entry name" value="Toxin_29"/>
</dbReference>
<dbReference type="Pfam" id="PF08116">
    <property type="entry name" value="Toxin_29"/>
    <property type="match status" value="1"/>
</dbReference>
<protein>
    <recommendedName>
        <fullName>U6-ctenitoxin-Pr1a</fullName>
        <shortName>U6-CNTX-Pr1a</shortName>
    </recommendedName>
    <alternativeName>
        <fullName>Venom protein PRTx17C1</fullName>
    </alternativeName>
</protein>
<organism>
    <name type="scientific">Phoneutria reidyi</name>
    <name type="common">Brazilian Amazonian armed spider</name>
    <name type="synonym">Ctenus reidyi</name>
    <dbReference type="NCBI Taxonomy" id="272752"/>
    <lineage>
        <taxon>Eukaryota</taxon>
        <taxon>Metazoa</taxon>
        <taxon>Ecdysozoa</taxon>
        <taxon>Arthropoda</taxon>
        <taxon>Chelicerata</taxon>
        <taxon>Arachnida</taxon>
        <taxon>Araneae</taxon>
        <taxon>Araneomorphae</taxon>
        <taxon>Entelegynae</taxon>
        <taxon>Lycosoidea</taxon>
        <taxon>Ctenidae</taxon>
        <taxon>Phoneutria</taxon>
    </lineage>
</organism>
<sequence length="32" mass="3472">AFCRFNGQQCTSDGQCCNGRCINAFQGRICIG</sequence>
<evidence type="ECO:0000250" key="1"/>
<evidence type="ECO:0000269" key="2">
    <source>
    </source>
</evidence>
<evidence type="ECO:0000305" key="3"/>
<feature type="peptide" id="PRO_0000044975" description="U6-ctenitoxin-Pr1a">
    <location>
        <begin position="1"/>
        <end position="32"/>
    </location>
</feature>
<feature type="disulfide bond" evidence="1">
    <location>
        <begin position="3"/>
        <end position="17"/>
    </location>
</feature>
<feature type="disulfide bond" evidence="1">
    <location>
        <begin position="10"/>
        <end position="21"/>
    </location>
</feature>
<feature type="disulfide bond" evidence="1">
    <location>
        <begin position="16"/>
        <end position="30"/>
    </location>
</feature>
<comment type="subcellular location">
    <subcellularLocation>
        <location evidence="2">Secreted</location>
    </subcellularLocation>
</comment>
<comment type="tissue specificity">
    <text evidence="2">Expressed by the venom gland.</text>
</comment>
<comment type="domain">
    <text evidence="1">The presence of a 'disulfide through disulfide knot' structurally defines this protein as a knottin.</text>
</comment>
<comment type="mass spectrometry" mass="3465.7" method="Electrospray" evidence="2"/>
<comment type="similarity">
    <text evidence="3">Belongs to the neurotoxin 17 (21C2) family.</text>
</comment>
<reference evidence="3" key="1">
    <citation type="journal article" date="2006" name="Comp. Biochem. Physiol.">
        <title>Comparison of the partial proteomes of the venoms of Brazilian spiders of the genus Phoneutria.</title>
        <authorList>
            <person name="Richardson M."/>
            <person name="Pimenta A.M."/>
            <person name="Bemquerer M.P."/>
            <person name="Santoro M.M."/>
            <person name="Beirao P.S."/>
            <person name="Lima M.E."/>
            <person name="Figueiredo S.G."/>
            <person name="Bloch C. Jr."/>
            <person name="Vasconcelos E.A."/>
            <person name="Campos F.A."/>
            <person name="Gomes P.C."/>
            <person name="Cordeiro M.N."/>
        </authorList>
    </citation>
    <scope>PROTEIN SEQUENCE</scope>
    <scope>SUBCELLULAR LOCATION</scope>
    <scope>TISSUE SPECIFICITY</scope>
    <scope>MASS SPECTROMETRY</scope>
    <source>
        <tissue evidence="2">Venom</tissue>
    </source>
</reference>
<proteinExistence type="evidence at protein level"/>